<organism>
    <name type="scientific">Kluyveromyces lactis (strain ATCC 8585 / CBS 2359 / DSM 70799 / NBRC 1267 / NRRL Y-1140 / WM37)</name>
    <name type="common">Yeast</name>
    <name type="synonym">Candida sphaerica</name>
    <dbReference type="NCBI Taxonomy" id="284590"/>
    <lineage>
        <taxon>Eukaryota</taxon>
        <taxon>Fungi</taxon>
        <taxon>Dikarya</taxon>
        <taxon>Ascomycota</taxon>
        <taxon>Saccharomycotina</taxon>
        <taxon>Saccharomycetes</taxon>
        <taxon>Saccharomycetales</taxon>
        <taxon>Saccharomycetaceae</taxon>
        <taxon>Kluyveromyces</taxon>
    </lineage>
</organism>
<evidence type="ECO:0000250" key="1"/>
<evidence type="ECO:0000305" key="2"/>
<name>ATG7_KLULA</name>
<accession>Q6CXW3</accession>
<reference key="1">
    <citation type="journal article" date="2004" name="Nature">
        <title>Genome evolution in yeasts.</title>
        <authorList>
            <person name="Dujon B."/>
            <person name="Sherman D."/>
            <person name="Fischer G."/>
            <person name="Durrens P."/>
            <person name="Casaregola S."/>
            <person name="Lafontaine I."/>
            <person name="de Montigny J."/>
            <person name="Marck C."/>
            <person name="Neuveglise C."/>
            <person name="Talla E."/>
            <person name="Goffard N."/>
            <person name="Frangeul L."/>
            <person name="Aigle M."/>
            <person name="Anthouard V."/>
            <person name="Babour A."/>
            <person name="Barbe V."/>
            <person name="Barnay S."/>
            <person name="Blanchin S."/>
            <person name="Beckerich J.-M."/>
            <person name="Beyne E."/>
            <person name="Bleykasten C."/>
            <person name="Boisrame A."/>
            <person name="Boyer J."/>
            <person name="Cattolico L."/>
            <person name="Confanioleri F."/>
            <person name="de Daruvar A."/>
            <person name="Despons L."/>
            <person name="Fabre E."/>
            <person name="Fairhead C."/>
            <person name="Ferry-Dumazet H."/>
            <person name="Groppi A."/>
            <person name="Hantraye F."/>
            <person name="Hennequin C."/>
            <person name="Jauniaux N."/>
            <person name="Joyet P."/>
            <person name="Kachouri R."/>
            <person name="Kerrest A."/>
            <person name="Koszul R."/>
            <person name="Lemaire M."/>
            <person name="Lesur I."/>
            <person name="Ma L."/>
            <person name="Muller H."/>
            <person name="Nicaud J.-M."/>
            <person name="Nikolski M."/>
            <person name="Oztas S."/>
            <person name="Ozier-Kalogeropoulos O."/>
            <person name="Pellenz S."/>
            <person name="Potier S."/>
            <person name="Richard G.-F."/>
            <person name="Straub M.-L."/>
            <person name="Suleau A."/>
            <person name="Swennen D."/>
            <person name="Tekaia F."/>
            <person name="Wesolowski-Louvel M."/>
            <person name="Westhof E."/>
            <person name="Wirth B."/>
            <person name="Zeniou-Meyer M."/>
            <person name="Zivanovic Y."/>
            <person name="Bolotin-Fukuhara M."/>
            <person name="Thierry A."/>
            <person name="Bouchier C."/>
            <person name="Caudron B."/>
            <person name="Scarpelli C."/>
            <person name="Gaillardin C."/>
            <person name="Weissenbach J."/>
            <person name="Wincker P."/>
            <person name="Souciet J.-L."/>
        </authorList>
    </citation>
    <scope>NUCLEOTIDE SEQUENCE [LARGE SCALE GENOMIC DNA]</scope>
    <source>
        <strain>ATCC 8585 / CBS 2359 / DSM 70799 / NBRC 1267 / NRRL Y-1140 / WM37</strain>
    </source>
</reference>
<protein>
    <recommendedName>
        <fullName>Ubiquitin-like modifier-activating enzyme ATG7</fullName>
    </recommendedName>
    <alternativeName>
        <fullName>ATG12-activating enzyme E1 ATG7</fullName>
    </alternativeName>
    <alternativeName>
        <fullName>Autophagy-related protein 7</fullName>
    </alternativeName>
</protein>
<comment type="function">
    <text evidence="1">E1-like activating enzyme involved in the 2 ubiquitin-like systems required for cytoplasm to vacuole transport (Cvt) and autophagy. Activates ATG12 for its conjugation with ATG5 and ATG8 for its conjugation with phosphatidylethanolamine. Both systems are needed for the ATG8 association to Cvt vesicles and autophagosomes membranes. Autophagy is essential for maintenance of amino acid levels and protein synthesis under nitrogen starvation. Required for selective autophagic degradation of the nucleus (nucleophagy) as well as for mitophagy which contributes to regulate mitochondrial quantity and quality by eliminating the mitochondria to a basal level to fulfill cellular energy requirements and preventing excess ROS production. Plays a role in the regulation of filamentous growth and chronological longevity (By similarity).</text>
</comment>
<comment type="subunit">
    <text evidence="1">Homodimer.</text>
</comment>
<comment type="subcellular location">
    <subcellularLocation>
        <location evidence="1">Cytoplasm</location>
    </subcellularLocation>
    <subcellularLocation>
        <location evidence="1">Preautophagosomal structure</location>
    </subcellularLocation>
</comment>
<comment type="domain">
    <text evidence="1">The GxGxxG motif is important for the function, possibly through binding with ATP.</text>
</comment>
<comment type="similarity">
    <text evidence="2">Belongs to the ATG7 family.</text>
</comment>
<sequence>MLNDLKFSPAFKSFVDTSFFHELSRLKLEVFKLDSAEKELFSALDLENITSNTVSLSLRDDSFDPVLNNEAVTLKGSVLNFNTIESFKSCDKVKFIKEKGQQLLEQGLKNGLKECVRFYVISFADLKKYKFYYWVCMPTFQSEGSSYEIISTKSIEDGVKKDIWEQNSFISCVVDGKIQEASPQYLKVCQKVIFKDFSRLKGIPAAVTKNFLTVWSQISTRNTYTICFLRDDNSSFAAEIRVTGSNTGCLKVSGWEKNGLGKLAPKSADLSSLMDPVKIAEQSIDLNLKLMKWRIAPDIDLERIKNIKALILGSGTLGCYVARALLAWGTRHVTFVDNSTVSFSNPVRQPLFNFEDCGRPKAEAASDSLKKIFPSVVSAGYQLEIPMIGHPVSNESKQRKDYEILDELIRTHDVIFLLMDARETRWLPSVLGRMHEKIVINAALGFDSYLVMRHGNNNDNLGCYFCNDIVAPSDSLTDRTLDQMCTVTRPGVALLAASQAVELLVTYLQPSTNVLGSAPHQIRGFLNEFKTVKLETPAYQHCCASNENVILTLKENGWNFVKQALDDYKCVEQLSGLSKVQEEAELAIQEDISFDDDEELSIE</sequence>
<gene>
    <name type="primary">ATG7</name>
    <name type="ordered locus">KLLA0A05137g</name>
</gene>
<keyword id="KW-0072">Autophagy</keyword>
<keyword id="KW-0963">Cytoplasm</keyword>
<keyword id="KW-0653">Protein transport</keyword>
<keyword id="KW-1185">Reference proteome</keyword>
<keyword id="KW-0813">Transport</keyword>
<keyword id="KW-0833">Ubl conjugation pathway</keyword>
<proteinExistence type="inferred from homology"/>
<feature type="chain" id="PRO_0000212816" description="Ubiquitin-like modifier-activating enzyme ATG7">
    <location>
        <begin position="1"/>
        <end position="603"/>
    </location>
</feature>
<feature type="short sequence motif" description="GXGXXG motif">
    <location>
        <begin position="313"/>
        <end position="318"/>
    </location>
</feature>
<feature type="active site" description="Glycyl thioester intermediate" evidence="1">
    <location>
        <position position="485"/>
    </location>
</feature>
<dbReference type="EMBL" id="CR382121">
    <property type="protein sequence ID" value="CAH02814.1"/>
    <property type="molecule type" value="Genomic_DNA"/>
</dbReference>
<dbReference type="RefSeq" id="XP_451226.1">
    <property type="nucleotide sequence ID" value="XM_451226.1"/>
</dbReference>
<dbReference type="SMR" id="Q6CXW3"/>
<dbReference type="FunCoup" id="Q6CXW3">
    <property type="interactions" value="786"/>
</dbReference>
<dbReference type="STRING" id="284590.Q6CXW3"/>
<dbReference type="PaxDb" id="284590-Q6CXW3"/>
<dbReference type="KEGG" id="kla:KLLA0_A05137g"/>
<dbReference type="eggNOG" id="KOG2337">
    <property type="taxonomic scope" value="Eukaryota"/>
</dbReference>
<dbReference type="HOGENOM" id="CLU_012998_2_1_1"/>
<dbReference type="InParanoid" id="Q6CXW3"/>
<dbReference type="OMA" id="RQIWDAI"/>
<dbReference type="Proteomes" id="UP000000598">
    <property type="component" value="Chromosome A"/>
</dbReference>
<dbReference type="GO" id="GO:0000407">
    <property type="term" value="C:phagophore assembly site"/>
    <property type="evidence" value="ECO:0007669"/>
    <property type="project" value="UniProtKB-SubCell"/>
</dbReference>
<dbReference type="GO" id="GO:0019778">
    <property type="term" value="F:Atg12 activating enzyme activity"/>
    <property type="evidence" value="ECO:0007669"/>
    <property type="project" value="TreeGrafter"/>
</dbReference>
<dbReference type="GO" id="GO:0019779">
    <property type="term" value="F:Atg8 activating enzyme activity"/>
    <property type="evidence" value="ECO:0007669"/>
    <property type="project" value="TreeGrafter"/>
</dbReference>
<dbReference type="GO" id="GO:0000045">
    <property type="term" value="P:autophagosome assembly"/>
    <property type="evidence" value="ECO:0007669"/>
    <property type="project" value="TreeGrafter"/>
</dbReference>
<dbReference type="GO" id="GO:0000422">
    <property type="term" value="P:autophagy of mitochondrion"/>
    <property type="evidence" value="ECO:0007669"/>
    <property type="project" value="TreeGrafter"/>
</dbReference>
<dbReference type="GO" id="GO:0006995">
    <property type="term" value="P:cellular response to nitrogen starvation"/>
    <property type="evidence" value="ECO:0007669"/>
    <property type="project" value="TreeGrafter"/>
</dbReference>
<dbReference type="GO" id="GO:0034727">
    <property type="term" value="P:piecemeal microautophagy of the nucleus"/>
    <property type="evidence" value="ECO:0007669"/>
    <property type="project" value="TreeGrafter"/>
</dbReference>
<dbReference type="GO" id="GO:0032446">
    <property type="term" value="P:protein modification by small protein conjugation"/>
    <property type="evidence" value="ECO:0007669"/>
    <property type="project" value="TreeGrafter"/>
</dbReference>
<dbReference type="GO" id="GO:0015031">
    <property type="term" value="P:protein transport"/>
    <property type="evidence" value="ECO:0007669"/>
    <property type="project" value="UniProtKB-KW"/>
</dbReference>
<dbReference type="FunFam" id="3.40.50.720:FF:000243">
    <property type="entry name" value="Ubiquitin-like modifier-activating enzyme ATG7"/>
    <property type="match status" value="1"/>
</dbReference>
<dbReference type="Gene3D" id="3.40.50.720">
    <property type="entry name" value="NAD(P)-binding Rossmann-like Domain"/>
    <property type="match status" value="1"/>
</dbReference>
<dbReference type="Gene3D" id="3.40.140.100">
    <property type="entry name" value="Ubiquitin-like modifier-activating enzyme ATG7 C-terminal domain"/>
    <property type="match status" value="1"/>
</dbReference>
<dbReference type="Gene3D" id="3.40.140.70">
    <property type="entry name" value="Ubiquitin-like modifier-activating enzyme ATG7 N-terminal domain"/>
    <property type="match status" value="1"/>
</dbReference>
<dbReference type="InterPro" id="IPR006285">
    <property type="entry name" value="Atg7"/>
</dbReference>
<dbReference type="InterPro" id="IPR032197">
    <property type="entry name" value="Atg7_N"/>
</dbReference>
<dbReference type="InterPro" id="IPR042522">
    <property type="entry name" value="Atg7_N_1"/>
</dbReference>
<dbReference type="InterPro" id="IPR042523">
    <property type="entry name" value="Atg7_N_2"/>
</dbReference>
<dbReference type="InterPro" id="IPR045886">
    <property type="entry name" value="ThiF/MoeB/HesA"/>
</dbReference>
<dbReference type="InterPro" id="IPR000594">
    <property type="entry name" value="ThiF_NAD_FAD-bd"/>
</dbReference>
<dbReference type="InterPro" id="IPR035985">
    <property type="entry name" value="Ubiquitin-activating_enz"/>
</dbReference>
<dbReference type="NCBIfam" id="TIGR01381">
    <property type="entry name" value="E1_like_apg7"/>
    <property type="match status" value="1"/>
</dbReference>
<dbReference type="PANTHER" id="PTHR10953">
    <property type="entry name" value="UBIQUITIN-ACTIVATING ENZYME E1"/>
    <property type="match status" value="1"/>
</dbReference>
<dbReference type="PANTHER" id="PTHR10953:SF3">
    <property type="entry name" value="UBIQUITIN-LIKE MODIFIER-ACTIVATING ENZYME ATG7"/>
    <property type="match status" value="1"/>
</dbReference>
<dbReference type="Pfam" id="PF16420">
    <property type="entry name" value="ATG7_N"/>
    <property type="match status" value="1"/>
</dbReference>
<dbReference type="Pfam" id="PF00899">
    <property type="entry name" value="ThiF"/>
    <property type="match status" value="1"/>
</dbReference>
<dbReference type="SUPFAM" id="SSF69572">
    <property type="entry name" value="Activating enzymes of the ubiquitin-like proteins"/>
    <property type="match status" value="1"/>
</dbReference>